<proteinExistence type="inferred from homology"/>
<accession>Q57TQ2</accession>
<dbReference type="EC" id="2.7.1.39" evidence="1"/>
<dbReference type="EMBL" id="AE017220">
    <property type="protein sequence ID" value="AAX63909.1"/>
    <property type="molecule type" value="Genomic_DNA"/>
</dbReference>
<dbReference type="RefSeq" id="WP_000241685.1">
    <property type="nucleotide sequence ID" value="NC_006905.1"/>
</dbReference>
<dbReference type="SMR" id="Q57TQ2"/>
<dbReference type="KEGG" id="sec:SCH_0003"/>
<dbReference type="HOGENOM" id="CLU_041243_1_1_6"/>
<dbReference type="UniPathway" id="UPA00050">
    <property type="reaction ID" value="UER00064"/>
</dbReference>
<dbReference type="Proteomes" id="UP000000538">
    <property type="component" value="Chromosome"/>
</dbReference>
<dbReference type="GO" id="GO:0005737">
    <property type="term" value="C:cytoplasm"/>
    <property type="evidence" value="ECO:0007669"/>
    <property type="project" value="UniProtKB-SubCell"/>
</dbReference>
<dbReference type="GO" id="GO:0005524">
    <property type="term" value="F:ATP binding"/>
    <property type="evidence" value="ECO:0007669"/>
    <property type="project" value="UniProtKB-UniRule"/>
</dbReference>
<dbReference type="GO" id="GO:0004413">
    <property type="term" value="F:homoserine kinase activity"/>
    <property type="evidence" value="ECO:0007669"/>
    <property type="project" value="UniProtKB-UniRule"/>
</dbReference>
<dbReference type="GO" id="GO:0009088">
    <property type="term" value="P:threonine biosynthetic process"/>
    <property type="evidence" value="ECO:0007669"/>
    <property type="project" value="UniProtKB-UniRule"/>
</dbReference>
<dbReference type="FunFam" id="3.30.230.10:FF:000020">
    <property type="entry name" value="Homoserine kinase"/>
    <property type="match status" value="1"/>
</dbReference>
<dbReference type="FunFam" id="3.30.70.890:FF:000002">
    <property type="entry name" value="Homoserine kinase"/>
    <property type="match status" value="1"/>
</dbReference>
<dbReference type="Gene3D" id="3.30.230.10">
    <property type="match status" value="1"/>
</dbReference>
<dbReference type="Gene3D" id="3.30.70.890">
    <property type="entry name" value="GHMP kinase, C-terminal domain"/>
    <property type="match status" value="1"/>
</dbReference>
<dbReference type="HAMAP" id="MF_00384">
    <property type="entry name" value="Homoser_kinase"/>
    <property type="match status" value="1"/>
</dbReference>
<dbReference type="InterPro" id="IPR013750">
    <property type="entry name" value="GHMP_kinase_C_dom"/>
</dbReference>
<dbReference type="InterPro" id="IPR036554">
    <property type="entry name" value="GHMP_kinase_C_sf"/>
</dbReference>
<dbReference type="InterPro" id="IPR006204">
    <property type="entry name" value="GHMP_kinase_N_dom"/>
</dbReference>
<dbReference type="InterPro" id="IPR006203">
    <property type="entry name" value="GHMP_knse_ATP-bd_CS"/>
</dbReference>
<dbReference type="InterPro" id="IPR000870">
    <property type="entry name" value="Homoserine_kinase"/>
</dbReference>
<dbReference type="InterPro" id="IPR020568">
    <property type="entry name" value="Ribosomal_Su5_D2-typ_SF"/>
</dbReference>
<dbReference type="InterPro" id="IPR014721">
    <property type="entry name" value="Ribsml_uS5_D2-typ_fold_subgr"/>
</dbReference>
<dbReference type="NCBIfam" id="NF002288">
    <property type="entry name" value="PRK01212.1-4"/>
    <property type="match status" value="1"/>
</dbReference>
<dbReference type="NCBIfam" id="TIGR00191">
    <property type="entry name" value="thrB"/>
    <property type="match status" value="1"/>
</dbReference>
<dbReference type="PANTHER" id="PTHR20861:SF1">
    <property type="entry name" value="HOMOSERINE KINASE"/>
    <property type="match status" value="1"/>
</dbReference>
<dbReference type="PANTHER" id="PTHR20861">
    <property type="entry name" value="HOMOSERINE/4-DIPHOSPHOCYTIDYL-2-C-METHYL-D-ERYTHRITOL KINASE"/>
    <property type="match status" value="1"/>
</dbReference>
<dbReference type="Pfam" id="PF08544">
    <property type="entry name" value="GHMP_kinases_C"/>
    <property type="match status" value="1"/>
</dbReference>
<dbReference type="Pfam" id="PF00288">
    <property type="entry name" value="GHMP_kinases_N"/>
    <property type="match status" value="1"/>
</dbReference>
<dbReference type="PIRSF" id="PIRSF000676">
    <property type="entry name" value="Homoser_kin"/>
    <property type="match status" value="1"/>
</dbReference>
<dbReference type="PRINTS" id="PR00958">
    <property type="entry name" value="HOMSERKINASE"/>
</dbReference>
<dbReference type="SUPFAM" id="SSF55060">
    <property type="entry name" value="GHMP Kinase, C-terminal domain"/>
    <property type="match status" value="1"/>
</dbReference>
<dbReference type="SUPFAM" id="SSF54211">
    <property type="entry name" value="Ribosomal protein S5 domain 2-like"/>
    <property type="match status" value="1"/>
</dbReference>
<dbReference type="PROSITE" id="PS00627">
    <property type="entry name" value="GHMP_KINASES_ATP"/>
    <property type="match status" value="1"/>
</dbReference>
<sequence>MVKVYAPASSANMSVGFDVLGAAVTPVDGTLLGDVVSVEAADHFRLHNLGRFADKLPPEPRENIVYQCWERFCQALGKTIPVAMTLEKNMPIGSGLGSSACSVVAALVAMNEHCGKPLNDTRLLALMGELEGRISGSIHYDNVAPCFLGGMQLMIEENGIISQQVPGFDEWLWVLAYPGIKVSTAEARAILPAQYRRQDCIAHGRHLAGFIHACYSRQPQLAAALMKDVIAEPYRARLLPGFSQARQAVSEIGALASGISGSGPTLFALCDKPETAQRVADWLSKHYLQNQEGFVHICRLDTAGARVVG</sequence>
<feature type="chain" id="PRO_1000049161" description="Homoserine kinase">
    <location>
        <begin position="1"/>
        <end position="309"/>
    </location>
</feature>
<feature type="binding site" evidence="1">
    <location>
        <begin position="91"/>
        <end position="101"/>
    </location>
    <ligand>
        <name>ATP</name>
        <dbReference type="ChEBI" id="CHEBI:30616"/>
    </ligand>
</feature>
<evidence type="ECO:0000255" key="1">
    <source>
        <dbReference type="HAMAP-Rule" id="MF_00384"/>
    </source>
</evidence>
<gene>
    <name evidence="1" type="primary">thrB</name>
    <name type="ordered locus">SCH_0003</name>
</gene>
<name>KHSE_SALCH</name>
<keyword id="KW-0028">Amino-acid biosynthesis</keyword>
<keyword id="KW-0067">ATP-binding</keyword>
<keyword id="KW-0963">Cytoplasm</keyword>
<keyword id="KW-0418">Kinase</keyword>
<keyword id="KW-0547">Nucleotide-binding</keyword>
<keyword id="KW-0791">Threonine biosynthesis</keyword>
<keyword id="KW-0808">Transferase</keyword>
<protein>
    <recommendedName>
        <fullName evidence="1">Homoserine kinase</fullName>
        <shortName evidence="1">HK</shortName>
        <shortName evidence="1">HSK</shortName>
        <ecNumber evidence="1">2.7.1.39</ecNumber>
    </recommendedName>
</protein>
<reference key="1">
    <citation type="journal article" date="2005" name="Nucleic Acids Res.">
        <title>The genome sequence of Salmonella enterica serovar Choleraesuis, a highly invasive and resistant zoonotic pathogen.</title>
        <authorList>
            <person name="Chiu C.-H."/>
            <person name="Tang P."/>
            <person name="Chu C."/>
            <person name="Hu S."/>
            <person name="Bao Q."/>
            <person name="Yu J."/>
            <person name="Chou Y.-Y."/>
            <person name="Wang H.-S."/>
            <person name="Lee Y.-S."/>
        </authorList>
    </citation>
    <scope>NUCLEOTIDE SEQUENCE [LARGE SCALE GENOMIC DNA]</scope>
    <source>
        <strain>SC-B67</strain>
    </source>
</reference>
<comment type="function">
    <text evidence="1">Catalyzes the ATP-dependent phosphorylation of L-homoserine to L-homoserine phosphate.</text>
</comment>
<comment type="catalytic activity">
    <reaction evidence="1">
        <text>L-homoserine + ATP = O-phospho-L-homoserine + ADP + H(+)</text>
        <dbReference type="Rhea" id="RHEA:13985"/>
        <dbReference type="ChEBI" id="CHEBI:15378"/>
        <dbReference type="ChEBI" id="CHEBI:30616"/>
        <dbReference type="ChEBI" id="CHEBI:57476"/>
        <dbReference type="ChEBI" id="CHEBI:57590"/>
        <dbReference type="ChEBI" id="CHEBI:456216"/>
        <dbReference type="EC" id="2.7.1.39"/>
    </reaction>
</comment>
<comment type="pathway">
    <text evidence="1">Amino-acid biosynthesis; L-threonine biosynthesis; L-threonine from L-aspartate: step 4/5.</text>
</comment>
<comment type="subcellular location">
    <subcellularLocation>
        <location evidence="1">Cytoplasm</location>
    </subcellularLocation>
</comment>
<comment type="similarity">
    <text evidence="1">Belongs to the GHMP kinase family. Homoserine kinase subfamily.</text>
</comment>
<organism>
    <name type="scientific">Salmonella choleraesuis (strain SC-B67)</name>
    <dbReference type="NCBI Taxonomy" id="321314"/>
    <lineage>
        <taxon>Bacteria</taxon>
        <taxon>Pseudomonadati</taxon>
        <taxon>Pseudomonadota</taxon>
        <taxon>Gammaproteobacteria</taxon>
        <taxon>Enterobacterales</taxon>
        <taxon>Enterobacteriaceae</taxon>
        <taxon>Salmonella</taxon>
    </lineage>
</organism>